<proteinExistence type="inferred from homology"/>
<organism>
    <name type="scientific">Populus trichocarpa</name>
    <name type="common">Western balsam poplar</name>
    <name type="synonym">Populus balsamifera subsp. trichocarpa</name>
    <dbReference type="NCBI Taxonomy" id="3694"/>
    <lineage>
        <taxon>Eukaryota</taxon>
        <taxon>Viridiplantae</taxon>
        <taxon>Streptophyta</taxon>
        <taxon>Embryophyta</taxon>
        <taxon>Tracheophyta</taxon>
        <taxon>Spermatophyta</taxon>
        <taxon>Magnoliopsida</taxon>
        <taxon>eudicotyledons</taxon>
        <taxon>Gunneridae</taxon>
        <taxon>Pentapetalae</taxon>
        <taxon>rosids</taxon>
        <taxon>fabids</taxon>
        <taxon>Malpighiales</taxon>
        <taxon>Salicaceae</taxon>
        <taxon>Saliceae</taxon>
        <taxon>Populus</taxon>
    </lineage>
</organism>
<feature type="chain" id="PRO_0000362869" description="NAD(P)H-quinone oxidoreductase subunit 3, chloroplastic">
    <location>
        <begin position="1"/>
        <end position="120"/>
    </location>
</feature>
<feature type="transmembrane region" description="Helical" evidence="1">
    <location>
        <begin position="9"/>
        <end position="29"/>
    </location>
</feature>
<feature type="transmembrane region" description="Helical" evidence="1">
    <location>
        <begin position="64"/>
        <end position="84"/>
    </location>
</feature>
<feature type="transmembrane region" description="Helical" evidence="1">
    <location>
        <begin position="88"/>
        <end position="108"/>
    </location>
</feature>
<keyword id="KW-0150">Chloroplast</keyword>
<keyword id="KW-0472">Membrane</keyword>
<keyword id="KW-0520">NAD</keyword>
<keyword id="KW-0521">NADP</keyword>
<keyword id="KW-0934">Plastid</keyword>
<keyword id="KW-0618">Plastoquinone</keyword>
<keyword id="KW-0874">Quinone</keyword>
<keyword id="KW-1185">Reference proteome</keyword>
<keyword id="KW-0793">Thylakoid</keyword>
<keyword id="KW-1278">Translocase</keyword>
<keyword id="KW-0812">Transmembrane</keyword>
<keyword id="KW-1133">Transmembrane helix</keyword>
<keyword id="KW-0813">Transport</keyword>
<name>NU3C_POPTR</name>
<protein>
    <recommendedName>
        <fullName evidence="1">NAD(P)H-quinone oxidoreductase subunit 3, chloroplastic</fullName>
        <ecNumber evidence="1">7.1.1.-</ecNumber>
    </recommendedName>
    <alternativeName>
        <fullName evidence="1">NAD(P)H dehydrogenase subunit 3</fullName>
    </alternativeName>
    <alternativeName>
        <fullName evidence="1">NADH-plastoquinone oxidoreductase subunit 3</fullName>
    </alternativeName>
</protein>
<reference key="1">
    <citation type="journal article" date="2006" name="Science">
        <title>The genome of black cottonwood, Populus trichocarpa (Torr. &amp; Gray).</title>
        <authorList>
            <person name="Tuskan G.A."/>
            <person name="Difazio S."/>
            <person name="Jansson S."/>
            <person name="Bohlmann J."/>
            <person name="Grigoriev I."/>
            <person name="Hellsten U."/>
            <person name="Putnam N."/>
            <person name="Ralph S."/>
            <person name="Rombauts S."/>
            <person name="Salamov A."/>
            <person name="Schein J."/>
            <person name="Sterck L."/>
            <person name="Aerts A."/>
            <person name="Bhalerao R.R."/>
            <person name="Bhalerao R.P."/>
            <person name="Blaudez D."/>
            <person name="Boerjan W."/>
            <person name="Brun A."/>
            <person name="Brunner A."/>
            <person name="Busov V."/>
            <person name="Campbell M."/>
            <person name="Carlson J."/>
            <person name="Chalot M."/>
            <person name="Chapman J."/>
            <person name="Chen G.-L."/>
            <person name="Cooper D."/>
            <person name="Coutinho P.M."/>
            <person name="Couturier J."/>
            <person name="Covert S."/>
            <person name="Cronk Q."/>
            <person name="Cunningham R."/>
            <person name="Davis J."/>
            <person name="Degroeve S."/>
            <person name="Dejardin A."/>
            <person name="dePamphilis C.W."/>
            <person name="Detter J."/>
            <person name="Dirks B."/>
            <person name="Dubchak I."/>
            <person name="Duplessis S."/>
            <person name="Ehlting J."/>
            <person name="Ellis B."/>
            <person name="Gendler K."/>
            <person name="Goodstein D."/>
            <person name="Gribskov M."/>
            <person name="Grimwood J."/>
            <person name="Groover A."/>
            <person name="Gunter L."/>
            <person name="Hamberger B."/>
            <person name="Heinze B."/>
            <person name="Helariutta Y."/>
            <person name="Henrissat B."/>
            <person name="Holligan D."/>
            <person name="Holt R."/>
            <person name="Huang W."/>
            <person name="Islam-Faridi N."/>
            <person name="Jones S."/>
            <person name="Jones-Rhoades M."/>
            <person name="Jorgensen R."/>
            <person name="Joshi C."/>
            <person name="Kangasjaervi J."/>
            <person name="Karlsson J."/>
            <person name="Kelleher C."/>
            <person name="Kirkpatrick R."/>
            <person name="Kirst M."/>
            <person name="Kohler A."/>
            <person name="Kalluri U."/>
            <person name="Larimer F."/>
            <person name="Leebens-Mack J."/>
            <person name="Leple J.-C."/>
            <person name="Locascio P."/>
            <person name="Lou Y."/>
            <person name="Lucas S."/>
            <person name="Martin F."/>
            <person name="Montanini B."/>
            <person name="Napoli C."/>
            <person name="Nelson D.R."/>
            <person name="Nelson C."/>
            <person name="Nieminen K."/>
            <person name="Nilsson O."/>
            <person name="Pereda V."/>
            <person name="Peter G."/>
            <person name="Philippe R."/>
            <person name="Pilate G."/>
            <person name="Poliakov A."/>
            <person name="Razumovskaya J."/>
            <person name="Richardson P."/>
            <person name="Rinaldi C."/>
            <person name="Ritland K."/>
            <person name="Rouze P."/>
            <person name="Ryaboy D."/>
            <person name="Schmutz J."/>
            <person name="Schrader J."/>
            <person name="Segerman B."/>
            <person name="Shin H."/>
            <person name="Siddiqui A."/>
            <person name="Sterky F."/>
            <person name="Terry A."/>
            <person name="Tsai C.-J."/>
            <person name="Uberbacher E."/>
            <person name="Unneberg P."/>
            <person name="Vahala J."/>
            <person name="Wall K."/>
            <person name="Wessler S."/>
            <person name="Yang G."/>
            <person name="Yin T."/>
            <person name="Douglas C."/>
            <person name="Marra M."/>
            <person name="Sandberg G."/>
            <person name="Van de Peer Y."/>
            <person name="Rokhsar D.S."/>
        </authorList>
    </citation>
    <scope>NUCLEOTIDE SEQUENCE [LARGE SCALE GENOMIC DNA]</scope>
    <source>
        <strain>cv. Nisqually</strain>
    </source>
</reference>
<geneLocation type="chloroplast"/>
<accession>A4GYR5</accession>
<gene>
    <name evidence="1" type="primary">ndhC</name>
    <name type="ordered locus">Poptr_cp027</name>
</gene>
<evidence type="ECO:0000255" key="1">
    <source>
        <dbReference type="HAMAP-Rule" id="MF_01394"/>
    </source>
</evidence>
<comment type="function">
    <text evidence="1">NDH shuttles electrons from NAD(P)H:plastoquinone, via FMN and iron-sulfur (Fe-S) centers, to quinones in the photosynthetic chain and possibly in a chloroplast respiratory chain. The immediate electron acceptor for the enzyme in this species is believed to be plastoquinone. Couples the redox reaction to proton translocation, and thus conserves the redox energy in a proton gradient.</text>
</comment>
<comment type="catalytic activity">
    <reaction evidence="1">
        <text>a plastoquinone + NADH + (n+1) H(+)(in) = a plastoquinol + NAD(+) + n H(+)(out)</text>
        <dbReference type="Rhea" id="RHEA:42608"/>
        <dbReference type="Rhea" id="RHEA-COMP:9561"/>
        <dbReference type="Rhea" id="RHEA-COMP:9562"/>
        <dbReference type="ChEBI" id="CHEBI:15378"/>
        <dbReference type="ChEBI" id="CHEBI:17757"/>
        <dbReference type="ChEBI" id="CHEBI:57540"/>
        <dbReference type="ChEBI" id="CHEBI:57945"/>
        <dbReference type="ChEBI" id="CHEBI:62192"/>
    </reaction>
</comment>
<comment type="catalytic activity">
    <reaction evidence="1">
        <text>a plastoquinone + NADPH + (n+1) H(+)(in) = a plastoquinol + NADP(+) + n H(+)(out)</text>
        <dbReference type="Rhea" id="RHEA:42612"/>
        <dbReference type="Rhea" id="RHEA-COMP:9561"/>
        <dbReference type="Rhea" id="RHEA-COMP:9562"/>
        <dbReference type="ChEBI" id="CHEBI:15378"/>
        <dbReference type="ChEBI" id="CHEBI:17757"/>
        <dbReference type="ChEBI" id="CHEBI:57783"/>
        <dbReference type="ChEBI" id="CHEBI:58349"/>
        <dbReference type="ChEBI" id="CHEBI:62192"/>
    </reaction>
</comment>
<comment type="subunit">
    <text evidence="1">NDH is composed of at least 16 different subunits, 5 of which are encoded in the nucleus.</text>
</comment>
<comment type="subcellular location">
    <subcellularLocation>
        <location evidence="1">Plastid</location>
        <location evidence="1">Chloroplast thylakoid membrane</location>
        <topology evidence="1">Multi-pass membrane protein</topology>
    </subcellularLocation>
</comment>
<comment type="similarity">
    <text evidence="1">Belongs to the complex I subunit 3 family.</text>
</comment>
<dbReference type="EC" id="7.1.1.-" evidence="1"/>
<dbReference type="EMBL" id="EF489041">
    <property type="protein sequence ID" value="ABO36709.1"/>
    <property type="molecule type" value="Genomic_DNA"/>
</dbReference>
<dbReference type="RefSeq" id="YP_001109506.1">
    <property type="nucleotide sequence ID" value="NC_009143.1"/>
</dbReference>
<dbReference type="SMR" id="A4GYR5"/>
<dbReference type="FunCoup" id="A4GYR5">
    <property type="interactions" value="52"/>
</dbReference>
<dbReference type="STRING" id="3694.A4GYR5"/>
<dbReference type="EnsemblPlants" id="Potri.013G163000.1.v4.1">
    <property type="protein sequence ID" value="Potri.013G163000.1.v4.1"/>
    <property type="gene ID" value="Potri.013G163000.v4.1"/>
</dbReference>
<dbReference type="GeneID" id="4929672"/>
<dbReference type="Gramene" id="Potri.013G163000.1.v4.1">
    <property type="protein sequence ID" value="Potri.013G163000.1.v4.1"/>
    <property type="gene ID" value="Potri.013G163000.v4.1"/>
</dbReference>
<dbReference type="KEGG" id="pop:4929672"/>
<dbReference type="InParanoid" id="A4GYR5"/>
<dbReference type="OMA" id="YVYAFLY"/>
<dbReference type="OrthoDB" id="154075at2759"/>
<dbReference type="Proteomes" id="UP000006729">
    <property type="component" value="Chloroplast"/>
</dbReference>
<dbReference type="GO" id="GO:0009535">
    <property type="term" value="C:chloroplast thylakoid membrane"/>
    <property type="evidence" value="ECO:0007669"/>
    <property type="project" value="UniProtKB-SubCell"/>
</dbReference>
<dbReference type="GO" id="GO:0030964">
    <property type="term" value="C:NADH dehydrogenase complex"/>
    <property type="evidence" value="ECO:0000318"/>
    <property type="project" value="GO_Central"/>
</dbReference>
<dbReference type="GO" id="GO:0008137">
    <property type="term" value="F:NADH dehydrogenase (ubiquinone) activity"/>
    <property type="evidence" value="ECO:0000318"/>
    <property type="project" value="GO_Central"/>
</dbReference>
<dbReference type="GO" id="GO:0048038">
    <property type="term" value="F:quinone binding"/>
    <property type="evidence" value="ECO:0007669"/>
    <property type="project" value="UniProtKB-KW"/>
</dbReference>
<dbReference type="GO" id="GO:0019684">
    <property type="term" value="P:photosynthesis, light reaction"/>
    <property type="evidence" value="ECO:0007669"/>
    <property type="project" value="UniProtKB-UniRule"/>
</dbReference>
<dbReference type="FunFam" id="1.20.58.1610:FF:000001">
    <property type="entry name" value="NAD(P)H-quinone oxidoreductase subunit 3, chloroplastic"/>
    <property type="match status" value="1"/>
</dbReference>
<dbReference type="Gene3D" id="1.20.58.1610">
    <property type="entry name" value="NADH:ubiquinone/plastoquinone oxidoreductase, chain 3"/>
    <property type="match status" value="1"/>
</dbReference>
<dbReference type="HAMAP" id="MF_01394">
    <property type="entry name" value="NDH1_NuoA"/>
    <property type="match status" value="1"/>
</dbReference>
<dbReference type="InterPro" id="IPR023043">
    <property type="entry name" value="NAD(P)H_OxRDtase_bac/plastid"/>
</dbReference>
<dbReference type="InterPro" id="IPR000440">
    <property type="entry name" value="NADH_UbQ/plastoQ_OxRdtase_su3"/>
</dbReference>
<dbReference type="InterPro" id="IPR038430">
    <property type="entry name" value="NDAH_ubi_oxred_su3_sf"/>
</dbReference>
<dbReference type="PANTHER" id="PTHR11058">
    <property type="entry name" value="NADH-UBIQUINONE OXIDOREDUCTASE CHAIN 3"/>
    <property type="match status" value="1"/>
</dbReference>
<dbReference type="PANTHER" id="PTHR11058:SF9">
    <property type="entry name" value="NADH-UBIQUINONE OXIDOREDUCTASE CHAIN 3"/>
    <property type="match status" value="1"/>
</dbReference>
<dbReference type="Pfam" id="PF00507">
    <property type="entry name" value="Oxidored_q4"/>
    <property type="match status" value="1"/>
</dbReference>
<sequence length="120" mass="13894">MFLLYEYDIFWAFLIISSVIPILAFLISGLLSPIRKGPEKLSSYESGIEPMGDAWLQFRIRYYMFALVFVVFDVETVFLYPWAMSFDVLGVSVFIEALIFVLILIVGLVYAWRKGALEWS</sequence>